<gene>
    <name type="primary">ura-5</name>
    <name type="ORF">NCU05290</name>
</gene>
<organism>
    <name type="scientific">Neurospora crassa (strain ATCC 24698 / 74-OR23-1A / CBS 708.71 / DSM 1257 / FGSC 987)</name>
    <dbReference type="NCBI Taxonomy" id="367110"/>
    <lineage>
        <taxon>Eukaryota</taxon>
        <taxon>Fungi</taxon>
        <taxon>Dikarya</taxon>
        <taxon>Ascomycota</taxon>
        <taxon>Pezizomycotina</taxon>
        <taxon>Sordariomycetes</taxon>
        <taxon>Sordariomycetidae</taxon>
        <taxon>Sordariales</taxon>
        <taxon>Sordariaceae</taxon>
        <taxon>Neurospora</taxon>
    </lineage>
</organism>
<dbReference type="EC" id="2.4.2.10"/>
<dbReference type="EMBL" id="CM002239">
    <property type="protein sequence ID" value="EAA32825.1"/>
    <property type="molecule type" value="Genomic_DNA"/>
</dbReference>
<dbReference type="RefSeq" id="XP_962061.1">
    <property type="nucleotide sequence ID" value="XM_956968.2"/>
</dbReference>
<dbReference type="SMR" id="Q7RVF7"/>
<dbReference type="FunCoup" id="Q7RVF7">
    <property type="interactions" value="203"/>
</dbReference>
<dbReference type="STRING" id="367110.Q7RVF7"/>
<dbReference type="PaxDb" id="5141-EFNCRP00000004986"/>
<dbReference type="EnsemblFungi" id="EAA32825">
    <property type="protein sequence ID" value="EAA32825"/>
    <property type="gene ID" value="NCU05290"/>
</dbReference>
<dbReference type="GeneID" id="3878209"/>
<dbReference type="KEGG" id="ncr:NCU05290"/>
<dbReference type="VEuPathDB" id="FungiDB:NCU05290"/>
<dbReference type="HOGENOM" id="CLU_074878_0_0_1"/>
<dbReference type="InParanoid" id="Q7RVF7"/>
<dbReference type="OMA" id="SPFFMNA"/>
<dbReference type="OrthoDB" id="5553476at2759"/>
<dbReference type="UniPathway" id="UPA00070">
    <property type="reaction ID" value="UER00119"/>
</dbReference>
<dbReference type="Proteomes" id="UP000001805">
    <property type="component" value="Chromosome 4, Linkage Group IV"/>
</dbReference>
<dbReference type="GO" id="GO:0005737">
    <property type="term" value="C:cytoplasm"/>
    <property type="evidence" value="ECO:0000318"/>
    <property type="project" value="GO_Central"/>
</dbReference>
<dbReference type="GO" id="GO:0004588">
    <property type="term" value="F:orotate phosphoribosyltransferase activity"/>
    <property type="evidence" value="ECO:0000318"/>
    <property type="project" value="GO_Central"/>
</dbReference>
<dbReference type="GO" id="GO:0006207">
    <property type="term" value="P:'de novo' pyrimidine nucleobase biosynthetic process"/>
    <property type="evidence" value="ECO:0000318"/>
    <property type="project" value="GO_Central"/>
</dbReference>
<dbReference type="GO" id="GO:0044205">
    <property type="term" value="P:'de novo' UMP biosynthetic process"/>
    <property type="evidence" value="ECO:0007669"/>
    <property type="project" value="UniProtKB-UniPathway"/>
</dbReference>
<dbReference type="GO" id="GO:0006221">
    <property type="term" value="P:pyrimidine nucleotide biosynthetic process"/>
    <property type="evidence" value="ECO:0000318"/>
    <property type="project" value="GO_Central"/>
</dbReference>
<dbReference type="GO" id="GO:0046132">
    <property type="term" value="P:pyrimidine ribonucleoside biosynthetic process"/>
    <property type="evidence" value="ECO:0000318"/>
    <property type="project" value="GO_Central"/>
</dbReference>
<dbReference type="CDD" id="cd06223">
    <property type="entry name" value="PRTases_typeI"/>
    <property type="match status" value="1"/>
</dbReference>
<dbReference type="FunFam" id="3.40.50.2020:FF:000008">
    <property type="entry name" value="Orotate phosphoribosyltransferase"/>
    <property type="match status" value="1"/>
</dbReference>
<dbReference type="Gene3D" id="3.40.50.2020">
    <property type="match status" value="1"/>
</dbReference>
<dbReference type="HAMAP" id="MF_01208">
    <property type="entry name" value="PyrE"/>
    <property type="match status" value="1"/>
</dbReference>
<dbReference type="InterPro" id="IPR023031">
    <property type="entry name" value="OPRT"/>
</dbReference>
<dbReference type="InterPro" id="IPR004467">
    <property type="entry name" value="Or_phspho_trans_dom"/>
</dbReference>
<dbReference type="InterPro" id="IPR000836">
    <property type="entry name" value="PRibTrfase_dom"/>
</dbReference>
<dbReference type="InterPro" id="IPR029057">
    <property type="entry name" value="PRTase-like"/>
</dbReference>
<dbReference type="NCBIfam" id="TIGR00336">
    <property type="entry name" value="pyrE"/>
    <property type="match status" value="1"/>
</dbReference>
<dbReference type="PANTHER" id="PTHR46683">
    <property type="entry name" value="OROTATE PHOSPHORIBOSYLTRANSFERASE 1-RELATED"/>
    <property type="match status" value="1"/>
</dbReference>
<dbReference type="PANTHER" id="PTHR46683:SF1">
    <property type="entry name" value="OROTATE PHOSPHORIBOSYLTRANSFERASE 1-RELATED"/>
    <property type="match status" value="1"/>
</dbReference>
<dbReference type="Pfam" id="PF00156">
    <property type="entry name" value="Pribosyltran"/>
    <property type="match status" value="1"/>
</dbReference>
<dbReference type="SUPFAM" id="SSF53271">
    <property type="entry name" value="PRTase-like"/>
    <property type="match status" value="1"/>
</dbReference>
<dbReference type="PROSITE" id="PS00103">
    <property type="entry name" value="PUR_PYR_PR_TRANSFER"/>
    <property type="match status" value="1"/>
</dbReference>
<proteinExistence type="inferred from homology"/>
<name>PYRE_NEUCR</name>
<sequence>MAALSPYKADFLKASIDGGVLKFGSFELKSKRISPYFFNAGDFYRADLLQAISTAYAKCIIEAHKSGQLDFDIVFGPAYKGIPLATAATDKLAQLDPETYGKICYSFDRKEAKDHGEGGNIVGAPLKGKRILIVDDVITAGTAKREAIAKIEKEGGIVAGIVVALDRMEKLPAADGDDSKPGPSAMGELRKEYGIPIFAILTLDDIIEGMRGLASPEDVEKTEEYRAKYKATD</sequence>
<keyword id="KW-0328">Glycosyltransferase</keyword>
<keyword id="KW-0665">Pyrimidine biosynthesis</keyword>
<keyword id="KW-1185">Reference proteome</keyword>
<keyword id="KW-0808">Transferase</keyword>
<feature type="chain" id="PRO_0000260159" description="Orotate phosphoribosyltransferase">
    <location>
        <begin position="1"/>
        <end position="233"/>
    </location>
</feature>
<feature type="binding site" description="in other chain" evidence="1">
    <location>
        <position position="29"/>
    </location>
    <ligand>
        <name>5-phospho-alpha-D-ribose 1-diphosphate</name>
        <dbReference type="ChEBI" id="CHEBI:58017"/>
        <note>ligand shared between dimeric partners</note>
    </ligand>
</feature>
<feature type="binding site" evidence="1">
    <location>
        <begin position="37"/>
        <end position="38"/>
    </location>
    <ligand>
        <name>orotate</name>
        <dbReference type="ChEBI" id="CHEBI:30839"/>
    </ligand>
</feature>
<feature type="binding site" description="in other chain" evidence="1">
    <location>
        <begin position="79"/>
        <end position="80"/>
    </location>
    <ligand>
        <name>5-phospho-alpha-D-ribose 1-diphosphate</name>
        <dbReference type="ChEBI" id="CHEBI:58017"/>
        <note>ligand shared between dimeric partners</note>
    </ligand>
</feature>
<feature type="binding site" evidence="1">
    <location>
        <position position="109"/>
    </location>
    <ligand>
        <name>5-phospho-alpha-D-ribose 1-diphosphate</name>
        <dbReference type="ChEBI" id="CHEBI:58017"/>
        <note>ligand shared between dimeric partners</note>
    </ligand>
</feature>
<feature type="binding site" description="in other chain" evidence="1">
    <location>
        <position position="110"/>
    </location>
    <ligand>
        <name>5-phospho-alpha-D-ribose 1-diphosphate</name>
        <dbReference type="ChEBI" id="CHEBI:58017"/>
        <note>ligand shared between dimeric partners</note>
    </ligand>
</feature>
<feature type="binding site" evidence="1">
    <location>
        <position position="113"/>
    </location>
    <ligand>
        <name>5-phospho-alpha-D-ribose 1-diphosphate</name>
        <dbReference type="ChEBI" id="CHEBI:58017"/>
        <note>ligand shared between dimeric partners</note>
    </ligand>
</feature>
<feature type="binding site" evidence="1">
    <location>
        <position position="115"/>
    </location>
    <ligand>
        <name>5-phospho-alpha-D-ribose 1-diphosphate</name>
        <dbReference type="ChEBI" id="CHEBI:58017"/>
        <note>ligand shared between dimeric partners</note>
    </ligand>
</feature>
<feature type="binding site" description="in other chain" evidence="1">
    <location>
        <begin position="135"/>
        <end position="143"/>
    </location>
    <ligand>
        <name>5-phospho-alpha-D-ribose 1-diphosphate</name>
        <dbReference type="ChEBI" id="CHEBI:58017"/>
        <note>ligand shared between dimeric partners</note>
    </ligand>
</feature>
<feature type="binding site" evidence="1">
    <location>
        <position position="139"/>
    </location>
    <ligand>
        <name>orotate</name>
        <dbReference type="ChEBI" id="CHEBI:30839"/>
    </ligand>
</feature>
<feature type="binding site" evidence="1">
    <location>
        <position position="167"/>
    </location>
    <ligand>
        <name>orotate</name>
        <dbReference type="ChEBI" id="CHEBI:30839"/>
    </ligand>
</feature>
<evidence type="ECO:0000250" key="1"/>
<evidence type="ECO:0000305" key="2"/>
<comment type="function">
    <text evidence="1">Catalyzes the transfer of a ribosyl phosphate group from 5-phosphoribose 1-diphosphate to orotate, leading to the formation of orotidine monophosphate (OMP).</text>
</comment>
<comment type="catalytic activity">
    <reaction>
        <text>orotidine 5'-phosphate + diphosphate = orotate + 5-phospho-alpha-D-ribose 1-diphosphate</text>
        <dbReference type="Rhea" id="RHEA:10380"/>
        <dbReference type="ChEBI" id="CHEBI:30839"/>
        <dbReference type="ChEBI" id="CHEBI:33019"/>
        <dbReference type="ChEBI" id="CHEBI:57538"/>
        <dbReference type="ChEBI" id="CHEBI:58017"/>
        <dbReference type="EC" id="2.4.2.10"/>
    </reaction>
</comment>
<comment type="pathway">
    <text>Pyrimidine metabolism; UMP biosynthesis via de novo pathway; UMP from orotate: step 1/2.</text>
</comment>
<comment type="subunit">
    <text evidence="1">Homodimer.</text>
</comment>
<comment type="similarity">
    <text evidence="2">Belongs to the purine/pyrimidine phosphoribosyltransferase family. PyrE subfamily.</text>
</comment>
<reference key="1">
    <citation type="journal article" date="2003" name="Nature">
        <title>The genome sequence of the filamentous fungus Neurospora crassa.</title>
        <authorList>
            <person name="Galagan J.E."/>
            <person name="Calvo S.E."/>
            <person name="Borkovich K.A."/>
            <person name="Selker E.U."/>
            <person name="Read N.D."/>
            <person name="Jaffe D.B."/>
            <person name="FitzHugh W."/>
            <person name="Ma L.-J."/>
            <person name="Smirnov S."/>
            <person name="Purcell S."/>
            <person name="Rehman B."/>
            <person name="Elkins T."/>
            <person name="Engels R."/>
            <person name="Wang S."/>
            <person name="Nielsen C.B."/>
            <person name="Butler J."/>
            <person name="Endrizzi M."/>
            <person name="Qui D."/>
            <person name="Ianakiev P."/>
            <person name="Bell-Pedersen D."/>
            <person name="Nelson M.A."/>
            <person name="Werner-Washburne M."/>
            <person name="Selitrennikoff C.P."/>
            <person name="Kinsey J.A."/>
            <person name="Braun E.L."/>
            <person name="Zelter A."/>
            <person name="Schulte U."/>
            <person name="Kothe G.O."/>
            <person name="Jedd G."/>
            <person name="Mewes H.-W."/>
            <person name="Staben C."/>
            <person name="Marcotte E."/>
            <person name="Greenberg D."/>
            <person name="Roy A."/>
            <person name="Foley K."/>
            <person name="Naylor J."/>
            <person name="Stange-Thomann N."/>
            <person name="Barrett R."/>
            <person name="Gnerre S."/>
            <person name="Kamal M."/>
            <person name="Kamvysselis M."/>
            <person name="Mauceli E.W."/>
            <person name="Bielke C."/>
            <person name="Rudd S."/>
            <person name="Frishman D."/>
            <person name="Krystofova S."/>
            <person name="Rasmussen C."/>
            <person name="Metzenberg R.L."/>
            <person name="Perkins D.D."/>
            <person name="Kroken S."/>
            <person name="Cogoni C."/>
            <person name="Macino G."/>
            <person name="Catcheside D.E.A."/>
            <person name="Li W."/>
            <person name="Pratt R.J."/>
            <person name="Osmani S.A."/>
            <person name="DeSouza C.P.C."/>
            <person name="Glass N.L."/>
            <person name="Orbach M.J."/>
            <person name="Berglund J.A."/>
            <person name="Voelker R."/>
            <person name="Yarden O."/>
            <person name="Plamann M."/>
            <person name="Seiler S."/>
            <person name="Dunlap J.C."/>
            <person name="Radford A."/>
            <person name="Aramayo R."/>
            <person name="Natvig D.O."/>
            <person name="Alex L.A."/>
            <person name="Mannhaupt G."/>
            <person name="Ebbole D.J."/>
            <person name="Freitag M."/>
            <person name="Paulsen I."/>
            <person name="Sachs M.S."/>
            <person name="Lander E.S."/>
            <person name="Nusbaum C."/>
            <person name="Birren B.W."/>
        </authorList>
    </citation>
    <scope>NUCLEOTIDE SEQUENCE [LARGE SCALE GENOMIC DNA]</scope>
    <source>
        <strain>ATCC 24698 / 74-OR23-1A / CBS 708.71 / DSM 1257 / FGSC 987</strain>
    </source>
</reference>
<accession>Q7RVF7</accession>
<protein>
    <recommendedName>
        <fullName>Orotate phosphoribosyltransferase</fullName>
        <shortName>OPRT</shortName>
        <shortName>OPRTase</shortName>
        <ecNumber>2.4.2.10</ecNumber>
    </recommendedName>
</protein>